<keyword id="KW-0687">Ribonucleoprotein</keyword>
<keyword id="KW-0689">Ribosomal protein</keyword>
<gene>
    <name type="primary">rpl36</name>
    <name type="synonym">p36</name>
</gene>
<protein>
    <recommendedName>
        <fullName evidence="2">Large ribosomal subunit protein eL36</fullName>
    </recommendedName>
    <alternativeName>
        <fullName>60S ribosomal protein L36</fullName>
    </alternativeName>
    <alternativeName>
        <fullName>TRP36</fullName>
    </alternativeName>
</protein>
<name>RL36_TRIHM</name>
<proteinExistence type="inferred from homology"/>
<reference key="1">
    <citation type="submission" date="2000-09" db="EMBL/GenBank/DDBJ databases">
        <title>Isolation and characterization of a Trichoderma hamatum ribosomal protein gene, TRP36.</title>
        <authorList>
            <person name="Fekete C."/>
            <person name="Posta K."/>
            <person name="Hornok L."/>
        </authorList>
    </citation>
    <scope>NUCLEOTIDE SEQUENCE [GENOMIC DNA]</scope>
</reference>
<evidence type="ECO:0000256" key="1">
    <source>
        <dbReference type="SAM" id="MobiDB-lite"/>
    </source>
</evidence>
<evidence type="ECO:0000305" key="2"/>
<feature type="chain" id="PRO_0000195022" description="Large ribosomal subunit protein eL36">
    <location>
        <begin position="1"/>
        <end position="105"/>
    </location>
</feature>
<feature type="region of interest" description="Disordered" evidence="1">
    <location>
        <begin position="1"/>
        <end position="20"/>
    </location>
</feature>
<organism>
    <name type="scientific">Trichoderma hamatum</name>
    <dbReference type="NCBI Taxonomy" id="49224"/>
    <lineage>
        <taxon>Eukaryota</taxon>
        <taxon>Fungi</taxon>
        <taxon>Dikarya</taxon>
        <taxon>Ascomycota</taxon>
        <taxon>Pezizomycotina</taxon>
        <taxon>Sordariomycetes</taxon>
        <taxon>Hypocreomycetidae</taxon>
        <taxon>Hypocreales</taxon>
        <taxon>Hypocreaceae</taxon>
        <taxon>Trichoderma</taxon>
    </lineage>
</organism>
<dbReference type="EMBL" id="AF308443">
    <property type="protein sequence ID" value="AAG28787.1"/>
    <property type="molecule type" value="Genomic_DNA"/>
</dbReference>
<dbReference type="SMR" id="Q9HFR7"/>
<dbReference type="GO" id="GO:1990904">
    <property type="term" value="C:ribonucleoprotein complex"/>
    <property type="evidence" value="ECO:0007669"/>
    <property type="project" value="UniProtKB-KW"/>
</dbReference>
<dbReference type="GO" id="GO:0005840">
    <property type="term" value="C:ribosome"/>
    <property type="evidence" value="ECO:0007669"/>
    <property type="project" value="UniProtKB-KW"/>
</dbReference>
<dbReference type="GO" id="GO:0003735">
    <property type="term" value="F:structural constituent of ribosome"/>
    <property type="evidence" value="ECO:0007669"/>
    <property type="project" value="InterPro"/>
</dbReference>
<dbReference type="GO" id="GO:0006412">
    <property type="term" value="P:translation"/>
    <property type="evidence" value="ECO:0007669"/>
    <property type="project" value="InterPro"/>
</dbReference>
<dbReference type="FunFam" id="1.10.10.1760:FF:000003">
    <property type="entry name" value="60S ribosomal protein L36"/>
    <property type="match status" value="1"/>
</dbReference>
<dbReference type="Gene3D" id="1.10.10.1760">
    <property type="entry name" value="60S ribosomal protein L36"/>
    <property type="match status" value="1"/>
</dbReference>
<dbReference type="InterPro" id="IPR000509">
    <property type="entry name" value="Ribosomal_eL36"/>
</dbReference>
<dbReference type="InterPro" id="IPR038097">
    <property type="entry name" value="Ribosomal_eL36_sf"/>
</dbReference>
<dbReference type="PANTHER" id="PTHR10114">
    <property type="entry name" value="60S RIBOSOMAL PROTEIN L36"/>
    <property type="match status" value="1"/>
</dbReference>
<dbReference type="Pfam" id="PF01158">
    <property type="entry name" value="Ribosomal_L36e"/>
    <property type="match status" value="1"/>
</dbReference>
<dbReference type="PROSITE" id="PS01190">
    <property type="entry name" value="RIBOSOMAL_L36E"/>
    <property type="match status" value="1"/>
</dbReference>
<accession>Q9HFR7</accession>
<sequence>MAKEAPAKTGLAVGLNKGHKTTARVVKPRVSRTKGHLSKRTAFVREVVKEVAGLAPYERRVIELLRNSKDKRARKLAKKRLGTFGRAKRKVDELQRVIAESRRAH</sequence>
<comment type="similarity">
    <text evidence="2">Belongs to the eukaryotic ribosomal protein eL36 family.</text>
</comment>